<name>CH10_RUTMC</name>
<feature type="chain" id="PRO_1000025357" description="Co-chaperonin GroES">
    <location>
        <begin position="1"/>
        <end position="95"/>
    </location>
</feature>
<gene>
    <name evidence="1" type="primary">groES</name>
    <name evidence="1" type="synonym">groS</name>
    <name type="ordered locus">Rmag_0561</name>
</gene>
<keyword id="KW-0143">Chaperone</keyword>
<keyword id="KW-0963">Cytoplasm</keyword>
<accession>A1AWK6</accession>
<dbReference type="EMBL" id="CP000488">
    <property type="protein sequence ID" value="ABL02313.1"/>
    <property type="molecule type" value="Genomic_DNA"/>
</dbReference>
<dbReference type="RefSeq" id="WP_011737938.1">
    <property type="nucleotide sequence ID" value="NC_008610.1"/>
</dbReference>
<dbReference type="SMR" id="A1AWK6"/>
<dbReference type="STRING" id="413404.Rmag_0561"/>
<dbReference type="KEGG" id="rma:Rmag_0561"/>
<dbReference type="eggNOG" id="COG0234">
    <property type="taxonomic scope" value="Bacteria"/>
</dbReference>
<dbReference type="HOGENOM" id="CLU_132825_2_0_6"/>
<dbReference type="OrthoDB" id="9806791at2"/>
<dbReference type="Proteomes" id="UP000002587">
    <property type="component" value="Chromosome"/>
</dbReference>
<dbReference type="GO" id="GO:0005737">
    <property type="term" value="C:cytoplasm"/>
    <property type="evidence" value="ECO:0007669"/>
    <property type="project" value="UniProtKB-SubCell"/>
</dbReference>
<dbReference type="GO" id="GO:0005524">
    <property type="term" value="F:ATP binding"/>
    <property type="evidence" value="ECO:0007669"/>
    <property type="project" value="InterPro"/>
</dbReference>
<dbReference type="GO" id="GO:0046872">
    <property type="term" value="F:metal ion binding"/>
    <property type="evidence" value="ECO:0007669"/>
    <property type="project" value="TreeGrafter"/>
</dbReference>
<dbReference type="GO" id="GO:0044183">
    <property type="term" value="F:protein folding chaperone"/>
    <property type="evidence" value="ECO:0007669"/>
    <property type="project" value="InterPro"/>
</dbReference>
<dbReference type="GO" id="GO:0051087">
    <property type="term" value="F:protein-folding chaperone binding"/>
    <property type="evidence" value="ECO:0007669"/>
    <property type="project" value="TreeGrafter"/>
</dbReference>
<dbReference type="GO" id="GO:0051082">
    <property type="term" value="F:unfolded protein binding"/>
    <property type="evidence" value="ECO:0007669"/>
    <property type="project" value="TreeGrafter"/>
</dbReference>
<dbReference type="GO" id="GO:0051085">
    <property type="term" value="P:chaperone cofactor-dependent protein refolding"/>
    <property type="evidence" value="ECO:0007669"/>
    <property type="project" value="TreeGrafter"/>
</dbReference>
<dbReference type="CDD" id="cd00320">
    <property type="entry name" value="cpn10"/>
    <property type="match status" value="1"/>
</dbReference>
<dbReference type="FunFam" id="2.30.33.40:FF:000001">
    <property type="entry name" value="10 kDa chaperonin"/>
    <property type="match status" value="1"/>
</dbReference>
<dbReference type="Gene3D" id="2.30.33.40">
    <property type="entry name" value="GroES chaperonin"/>
    <property type="match status" value="1"/>
</dbReference>
<dbReference type="HAMAP" id="MF_00580">
    <property type="entry name" value="CH10"/>
    <property type="match status" value="1"/>
</dbReference>
<dbReference type="InterPro" id="IPR020818">
    <property type="entry name" value="Chaperonin_GroES"/>
</dbReference>
<dbReference type="InterPro" id="IPR037124">
    <property type="entry name" value="Chaperonin_GroES_sf"/>
</dbReference>
<dbReference type="InterPro" id="IPR018369">
    <property type="entry name" value="Chaprnonin_Cpn10_CS"/>
</dbReference>
<dbReference type="InterPro" id="IPR011032">
    <property type="entry name" value="GroES-like_sf"/>
</dbReference>
<dbReference type="NCBIfam" id="NF001527">
    <property type="entry name" value="PRK00364.1-2"/>
    <property type="match status" value="1"/>
</dbReference>
<dbReference type="NCBIfam" id="NF001531">
    <property type="entry name" value="PRK00364.2-2"/>
    <property type="match status" value="1"/>
</dbReference>
<dbReference type="NCBIfam" id="NF001533">
    <property type="entry name" value="PRK00364.2-4"/>
    <property type="match status" value="1"/>
</dbReference>
<dbReference type="PANTHER" id="PTHR10772">
    <property type="entry name" value="10 KDA HEAT SHOCK PROTEIN"/>
    <property type="match status" value="1"/>
</dbReference>
<dbReference type="PANTHER" id="PTHR10772:SF58">
    <property type="entry name" value="CO-CHAPERONIN GROES"/>
    <property type="match status" value="1"/>
</dbReference>
<dbReference type="Pfam" id="PF00166">
    <property type="entry name" value="Cpn10"/>
    <property type="match status" value="1"/>
</dbReference>
<dbReference type="PRINTS" id="PR00297">
    <property type="entry name" value="CHAPERONIN10"/>
</dbReference>
<dbReference type="SMART" id="SM00883">
    <property type="entry name" value="Cpn10"/>
    <property type="match status" value="1"/>
</dbReference>
<dbReference type="SUPFAM" id="SSF50129">
    <property type="entry name" value="GroES-like"/>
    <property type="match status" value="1"/>
</dbReference>
<dbReference type="PROSITE" id="PS00681">
    <property type="entry name" value="CHAPERONINS_CPN10"/>
    <property type="match status" value="1"/>
</dbReference>
<protein>
    <recommendedName>
        <fullName evidence="1">Co-chaperonin GroES</fullName>
    </recommendedName>
    <alternativeName>
        <fullName evidence="1">10 kDa chaperonin</fullName>
    </alternativeName>
    <alternativeName>
        <fullName evidence="1">Chaperonin-10</fullName>
        <shortName evidence="1">Cpn10</shortName>
    </alternativeName>
</protein>
<evidence type="ECO:0000255" key="1">
    <source>
        <dbReference type="HAMAP-Rule" id="MF_00580"/>
    </source>
</evidence>
<reference key="1">
    <citation type="journal article" date="2007" name="Science">
        <title>The Calyptogena magnifica chemoautotrophic symbiont genome.</title>
        <authorList>
            <person name="Newton I.L.G."/>
            <person name="Woyke T."/>
            <person name="Auchtung T.A."/>
            <person name="Dilly G.F."/>
            <person name="Dutton R.J."/>
            <person name="Fisher M.C."/>
            <person name="Fontanez K.M."/>
            <person name="Lau E."/>
            <person name="Stewart F.J."/>
            <person name="Richardson P.M."/>
            <person name="Barry K.W."/>
            <person name="Saunders E."/>
            <person name="Detter J.C."/>
            <person name="Wu D."/>
            <person name="Eisen J.A."/>
            <person name="Cavanaugh C.M."/>
        </authorList>
    </citation>
    <scope>NUCLEOTIDE SEQUENCE [LARGE SCALE GENOMIC DNA]</scope>
</reference>
<organism>
    <name type="scientific">Ruthia magnifica subsp. Calyptogena magnifica</name>
    <dbReference type="NCBI Taxonomy" id="413404"/>
    <lineage>
        <taxon>Bacteria</taxon>
        <taxon>Pseudomonadati</taxon>
        <taxon>Pseudomonadota</taxon>
        <taxon>Gammaproteobacteria</taxon>
        <taxon>Candidatus Pseudothioglobaceae</taxon>
        <taxon>Candidatus Ruthturnera</taxon>
    </lineage>
</organism>
<comment type="function">
    <text evidence="1">Together with the chaperonin GroEL, plays an essential role in assisting protein folding. The GroEL-GroES system forms a nano-cage that allows encapsulation of the non-native substrate proteins and provides a physical environment optimized to promote and accelerate protein folding. GroES binds to the apical surface of the GroEL ring, thereby capping the opening of the GroEL channel.</text>
</comment>
<comment type="subunit">
    <text evidence="1">Heptamer of 7 subunits arranged in a ring. Interacts with the chaperonin GroEL.</text>
</comment>
<comment type="subcellular location">
    <subcellularLocation>
        <location evidence="1">Cytoplasm</location>
    </subcellularLocation>
</comment>
<comment type="similarity">
    <text evidence="1">Belongs to the GroES chaperonin family.</text>
</comment>
<sequence>MNIRPLHDRVIVRRTQEEKTTESGLIIPDSATEKPSKGEILAIGNGKINDNGDVIALDVKVGDQVLFGQYAGNEIKVDGETLLVVREDDIVAIIE</sequence>
<proteinExistence type="inferred from homology"/>